<name>GNAL_HUMAN</name>
<sequence length="381" mass="44308">MGCLGGNSKTTEDQGVDEKERREANKKIEKQLQKERLAYKATHRLLLLGAGESGKSTIVKQMRILHVNGFNPEEKKQKILDIRKNVKDAIVTIVSAMSTIIPPVPLANPENQFRSDYIKSIAPITDFEYSQEFFDHVKKLWDDEGVKACFERSNEYQLIDCAQYFLERIDSVSLVDYTPTDQDLLRCRVLTSGIFETRFQVDKVNFHMFDVGGQRDERRKWIQCFNDVTAIIYVAACSSYNMVIREDNNTNRLRESLDLFESIWNNRWLRTISIILFLNKQDMLAEKVLAGKSKIEDYFPEYANYTVPEDATPDAGEDPKVTRAKFFIRDLFLRISTATGDGKHYCYPHFTCAVDTENIRRVFNDCRDIIQRMHLKQYELL</sequence>
<accession>P38405</accession>
<accession>B7ZA26</accession>
<accession>Q86XU3</accession>
<reference key="1">
    <citation type="journal article" date="1993" name="Endocrinology">
        <title>Human G(olf) alpha: complementary deoxyribonucleic acid structure and expression in pancreatic islets and other tissues outside the olfactory neuroepithelium and central nervous system.</title>
        <authorList>
            <person name="Zigman J.M."/>
            <person name="Westermark G.T."/>
            <person name="Lamendola J."/>
            <person name="Boel E."/>
            <person name="Steiner D.F."/>
        </authorList>
    </citation>
    <scope>NUCLEOTIDE SEQUENCE [MRNA] (ISOFORM 1)</scope>
    <scope>TISSUE SPECIFICITY</scope>
    <source>
        <tissue>Insulinoma</tissue>
    </source>
</reference>
<reference key="2">
    <citation type="submission" date="1996-04" db="EMBL/GenBank/DDBJ databases">
        <title>The gene for the human G protein Golf alpha.</title>
        <authorList>
            <person name="Vuoristo J.T."/>
            <person name="Berrettini W.H."/>
            <person name="Overhauser J."/>
            <person name="Prockop D.J."/>
            <person name="Ferraro T.N."/>
            <person name="Ala-Kokko L."/>
        </authorList>
    </citation>
    <scope>NUCLEOTIDE SEQUENCE [GENOMIC DNA]</scope>
</reference>
<reference key="3">
    <citation type="journal article" date="2004" name="Nat. Genet.">
        <title>Complete sequencing and characterization of 21,243 full-length human cDNAs.</title>
        <authorList>
            <person name="Ota T."/>
            <person name="Suzuki Y."/>
            <person name="Nishikawa T."/>
            <person name="Otsuki T."/>
            <person name="Sugiyama T."/>
            <person name="Irie R."/>
            <person name="Wakamatsu A."/>
            <person name="Hayashi K."/>
            <person name="Sato H."/>
            <person name="Nagai K."/>
            <person name="Kimura K."/>
            <person name="Makita H."/>
            <person name="Sekine M."/>
            <person name="Obayashi M."/>
            <person name="Nishi T."/>
            <person name="Shibahara T."/>
            <person name="Tanaka T."/>
            <person name="Ishii S."/>
            <person name="Yamamoto J."/>
            <person name="Saito K."/>
            <person name="Kawai Y."/>
            <person name="Isono Y."/>
            <person name="Nakamura Y."/>
            <person name="Nagahari K."/>
            <person name="Murakami K."/>
            <person name="Yasuda T."/>
            <person name="Iwayanagi T."/>
            <person name="Wagatsuma M."/>
            <person name="Shiratori A."/>
            <person name="Sudo H."/>
            <person name="Hosoiri T."/>
            <person name="Kaku Y."/>
            <person name="Kodaira H."/>
            <person name="Kondo H."/>
            <person name="Sugawara M."/>
            <person name="Takahashi M."/>
            <person name="Kanda K."/>
            <person name="Yokoi T."/>
            <person name="Furuya T."/>
            <person name="Kikkawa E."/>
            <person name="Omura Y."/>
            <person name="Abe K."/>
            <person name="Kamihara K."/>
            <person name="Katsuta N."/>
            <person name="Sato K."/>
            <person name="Tanikawa M."/>
            <person name="Yamazaki M."/>
            <person name="Ninomiya K."/>
            <person name="Ishibashi T."/>
            <person name="Yamashita H."/>
            <person name="Murakawa K."/>
            <person name="Fujimori K."/>
            <person name="Tanai H."/>
            <person name="Kimata M."/>
            <person name="Watanabe M."/>
            <person name="Hiraoka S."/>
            <person name="Chiba Y."/>
            <person name="Ishida S."/>
            <person name="Ono Y."/>
            <person name="Takiguchi S."/>
            <person name="Watanabe S."/>
            <person name="Yosida M."/>
            <person name="Hotuta T."/>
            <person name="Kusano J."/>
            <person name="Kanehori K."/>
            <person name="Takahashi-Fujii A."/>
            <person name="Hara H."/>
            <person name="Tanase T.-O."/>
            <person name="Nomura Y."/>
            <person name="Togiya S."/>
            <person name="Komai F."/>
            <person name="Hara R."/>
            <person name="Takeuchi K."/>
            <person name="Arita M."/>
            <person name="Imose N."/>
            <person name="Musashino K."/>
            <person name="Yuuki H."/>
            <person name="Oshima A."/>
            <person name="Sasaki N."/>
            <person name="Aotsuka S."/>
            <person name="Yoshikawa Y."/>
            <person name="Matsunawa H."/>
            <person name="Ichihara T."/>
            <person name="Shiohata N."/>
            <person name="Sano S."/>
            <person name="Moriya S."/>
            <person name="Momiyama H."/>
            <person name="Satoh N."/>
            <person name="Takami S."/>
            <person name="Terashima Y."/>
            <person name="Suzuki O."/>
            <person name="Nakagawa S."/>
            <person name="Senoh A."/>
            <person name="Mizoguchi H."/>
            <person name="Goto Y."/>
            <person name="Shimizu F."/>
            <person name="Wakebe H."/>
            <person name="Hishigaki H."/>
            <person name="Watanabe T."/>
            <person name="Sugiyama A."/>
            <person name="Takemoto M."/>
            <person name="Kawakami B."/>
            <person name="Yamazaki M."/>
            <person name="Watanabe K."/>
            <person name="Kumagai A."/>
            <person name="Itakura S."/>
            <person name="Fukuzumi Y."/>
            <person name="Fujimori Y."/>
            <person name="Komiyama M."/>
            <person name="Tashiro H."/>
            <person name="Tanigami A."/>
            <person name="Fujiwara T."/>
            <person name="Ono T."/>
            <person name="Yamada K."/>
            <person name="Fujii Y."/>
            <person name="Ozaki K."/>
            <person name="Hirao M."/>
            <person name="Ohmori Y."/>
            <person name="Kawabata A."/>
            <person name="Hikiji T."/>
            <person name="Kobatake N."/>
            <person name="Inagaki H."/>
            <person name="Ikema Y."/>
            <person name="Okamoto S."/>
            <person name="Okitani R."/>
            <person name="Kawakami T."/>
            <person name="Noguchi S."/>
            <person name="Itoh T."/>
            <person name="Shigeta K."/>
            <person name="Senba T."/>
            <person name="Matsumura K."/>
            <person name="Nakajima Y."/>
            <person name="Mizuno T."/>
            <person name="Morinaga M."/>
            <person name="Sasaki M."/>
            <person name="Togashi T."/>
            <person name="Oyama M."/>
            <person name="Hata H."/>
            <person name="Watanabe M."/>
            <person name="Komatsu T."/>
            <person name="Mizushima-Sugano J."/>
            <person name="Satoh T."/>
            <person name="Shirai Y."/>
            <person name="Takahashi Y."/>
            <person name="Nakagawa K."/>
            <person name="Okumura K."/>
            <person name="Nagase T."/>
            <person name="Nomura N."/>
            <person name="Kikuchi H."/>
            <person name="Masuho Y."/>
            <person name="Yamashita R."/>
            <person name="Nakai K."/>
            <person name="Yada T."/>
            <person name="Nakamura Y."/>
            <person name="Ohara O."/>
            <person name="Isogai T."/>
            <person name="Sugano S."/>
        </authorList>
    </citation>
    <scope>NUCLEOTIDE SEQUENCE [LARGE SCALE MRNA] (ISOFORM 3)</scope>
    <source>
        <tissue>Tongue</tissue>
    </source>
</reference>
<reference key="4">
    <citation type="journal article" date="2005" name="Nature">
        <title>DNA sequence and analysis of human chromosome 18.</title>
        <authorList>
            <person name="Nusbaum C."/>
            <person name="Zody M.C."/>
            <person name="Borowsky M.L."/>
            <person name="Kamal M."/>
            <person name="Kodira C.D."/>
            <person name="Taylor T.D."/>
            <person name="Whittaker C.A."/>
            <person name="Chang J.L."/>
            <person name="Cuomo C.A."/>
            <person name="Dewar K."/>
            <person name="FitzGerald M.G."/>
            <person name="Yang X."/>
            <person name="Abouelleil A."/>
            <person name="Allen N.R."/>
            <person name="Anderson S."/>
            <person name="Bloom T."/>
            <person name="Bugalter B."/>
            <person name="Butler J."/>
            <person name="Cook A."/>
            <person name="DeCaprio D."/>
            <person name="Engels R."/>
            <person name="Garber M."/>
            <person name="Gnirke A."/>
            <person name="Hafez N."/>
            <person name="Hall J.L."/>
            <person name="Norman C.H."/>
            <person name="Itoh T."/>
            <person name="Jaffe D.B."/>
            <person name="Kuroki Y."/>
            <person name="Lehoczky J."/>
            <person name="Lui A."/>
            <person name="Macdonald P."/>
            <person name="Mauceli E."/>
            <person name="Mikkelsen T.S."/>
            <person name="Naylor J.W."/>
            <person name="Nicol R."/>
            <person name="Nguyen C."/>
            <person name="Noguchi H."/>
            <person name="O'Leary S.B."/>
            <person name="Piqani B."/>
            <person name="Smith C.L."/>
            <person name="Talamas J.A."/>
            <person name="Topham K."/>
            <person name="Totoki Y."/>
            <person name="Toyoda A."/>
            <person name="Wain H.M."/>
            <person name="Young S.K."/>
            <person name="Zeng Q."/>
            <person name="Zimmer A.R."/>
            <person name="Fujiyama A."/>
            <person name="Hattori M."/>
            <person name="Birren B.W."/>
            <person name="Sakaki Y."/>
            <person name="Lander E.S."/>
        </authorList>
    </citation>
    <scope>NUCLEOTIDE SEQUENCE [LARGE SCALE GENOMIC DNA]</scope>
</reference>
<reference key="5">
    <citation type="submission" date="2005-09" db="EMBL/GenBank/DDBJ databases">
        <authorList>
            <person name="Mural R.J."/>
            <person name="Istrail S."/>
            <person name="Sutton G."/>
            <person name="Florea L."/>
            <person name="Halpern A.L."/>
            <person name="Mobarry C.M."/>
            <person name="Lippert R."/>
            <person name="Walenz B."/>
            <person name="Shatkay H."/>
            <person name="Dew I."/>
            <person name="Miller J.R."/>
            <person name="Flanigan M.J."/>
            <person name="Edwards N.J."/>
            <person name="Bolanos R."/>
            <person name="Fasulo D."/>
            <person name="Halldorsson B.V."/>
            <person name="Hannenhalli S."/>
            <person name="Turner R."/>
            <person name="Yooseph S."/>
            <person name="Lu F."/>
            <person name="Nusskern D.R."/>
            <person name="Shue B.C."/>
            <person name="Zheng X.H."/>
            <person name="Zhong F."/>
            <person name="Delcher A.L."/>
            <person name="Huson D.H."/>
            <person name="Kravitz S.A."/>
            <person name="Mouchard L."/>
            <person name="Reinert K."/>
            <person name="Remington K.A."/>
            <person name="Clark A.G."/>
            <person name="Waterman M.S."/>
            <person name="Eichler E.E."/>
            <person name="Adams M.D."/>
            <person name="Hunkapiller M.W."/>
            <person name="Myers E.W."/>
            <person name="Venter J.C."/>
        </authorList>
    </citation>
    <scope>NUCLEOTIDE SEQUENCE [LARGE SCALE GENOMIC DNA]</scope>
</reference>
<reference key="6">
    <citation type="journal article" date="2004" name="Genome Res.">
        <title>The status, quality, and expansion of the NIH full-length cDNA project: the Mammalian Gene Collection (MGC).</title>
        <authorList>
            <consortium name="The MGC Project Team"/>
        </authorList>
    </citation>
    <scope>NUCLEOTIDE SEQUENCE [LARGE SCALE MRNA] (ISOFORM 2)</scope>
    <source>
        <tissue>Testis</tissue>
    </source>
</reference>
<reference key="7">
    <citation type="submission" date="2002-03" db="EMBL/GenBank/DDBJ databases">
        <title>cDNA clones of human proteins involved in signal transduction sequenced by the Guthrie cDNA resource center (www.cdna.org).</title>
        <authorList>
            <person name="Puhl H.L. III"/>
            <person name="Ikeda S.R."/>
            <person name="Aronstam R.S."/>
        </authorList>
    </citation>
    <scope>NUCLEOTIDE SEQUENCE [LARGE SCALE MRNA] (ISOFORM 1)</scope>
    <source>
        <tissue>Brain</tissue>
    </source>
</reference>
<reference key="8">
    <citation type="journal article" date="2013" name="Biochim. Biophys. Acta">
        <title>A novel Galphas-binding protein, Gas-2 like 2, facilitates the signaling of the A2A adenosine receptor.</title>
        <authorList>
            <person name="Wu Y.C."/>
            <person name="Lai H.L."/>
            <person name="Chang W.C."/>
            <person name="Lin J.T."/>
            <person name="Liu Y.J."/>
            <person name="Chern Y."/>
        </authorList>
    </citation>
    <scope>INTERACTION WITH GAS2L2</scope>
</reference>
<reference evidence="18" key="9">
    <citation type="journal article" date="2023" name="Nature">
        <title>Structural basis of amine odorant perception by a mammal olfactory receptor.</title>
        <authorList>
            <person name="Guo L."/>
            <person name="Cheng J."/>
            <person name="Lian S."/>
            <person name="Liu Q."/>
            <person name="Lu Y."/>
            <person name="Zheng Y."/>
            <person name="Zhu K."/>
            <person name="Zhang M."/>
            <person name="Kong Y."/>
            <person name="Zhang C."/>
            <person name="Rong N."/>
            <person name="Zhuang Y."/>
            <person name="Fang G."/>
            <person name="Jiang J."/>
            <person name="Zhang T."/>
            <person name="Han X."/>
            <person name="Liu Z."/>
            <person name="Xia M."/>
            <person name="Liu S."/>
            <person name="Zhang L."/>
            <person name="Liberles S.D."/>
            <person name="Yu X."/>
            <person name="Xu Y."/>
            <person name="Yang F."/>
            <person name="Li Q."/>
            <person name="Sun J.P."/>
        </authorList>
    </citation>
    <scope>STRUCTURE BY ELECTRON MICROSCOPY (3.40 ANGSTROMS) OF 29-66; 192-238 AND 241-381</scope>
</reference>
<reference evidence="17" key="10">
    <citation type="journal article" date="2023" name="Structure">
        <title>Structures of Ric-8B in complex with Galpha protein folding clients reveal isoform specificity mechanisms.</title>
        <authorList>
            <person name="Papasergi-Scott M.M."/>
            <person name="Kwarcinski F.E."/>
            <person name="Yu M."/>
            <person name="Panova O."/>
            <person name="Ovrutsky A.M."/>
            <person name="Skiniotis G."/>
            <person name="Tall G.G."/>
        </authorList>
    </citation>
    <scope>STRUCTURE BY ELECTRON MICROSCOPY (2.80 ANGSTROMS) IN COMPLEX WITH RIC8B</scope>
    <scope>INTERACTION WITH RIC8B</scope>
</reference>
<reference key="11">
    <citation type="journal article" date="2013" name="Nat. Genet.">
        <title>Mutations in GNAL cause primary torsion dystonia.</title>
        <authorList>
            <person name="Fuchs T."/>
            <person name="Saunders-Pullman R."/>
            <person name="Masuho I."/>
            <person name="Luciano M.S."/>
            <person name="Raymond D."/>
            <person name="Factor S."/>
            <person name="Lang A.E."/>
            <person name="Liang T.W."/>
            <person name="Trosch R.M."/>
            <person name="White S."/>
            <person name="Ainehsazan E."/>
            <person name="Herve D."/>
            <person name="Sharma N."/>
            <person name="Ehrlich M.E."/>
            <person name="Martemyanov K.A."/>
            <person name="Bressman S.B."/>
            <person name="Ozelius L.J."/>
        </authorList>
    </citation>
    <scope>VARIANTS DYT25 102-PRO--VAL-104 DEL; MET-137 AND LYS-155</scope>
    <scope>VARIANT PHE-16</scope>
    <scope>CHARACTERIZATION OF VARIANTS DYT25 MET-137 AND LYS-155</scope>
</reference>
<organism>
    <name type="scientific">Homo sapiens</name>
    <name type="common">Human</name>
    <dbReference type="NCBI Taxonomy" id="9606"/>
    <lineage>
        <taxon>Eukaryota</taxon>
        <taxon>Metazoa</taxon>
        <taxon>Chordata</taxon>
        <taxon>Craniata</taxon>
        <taxon>Vertebrata</taxon>
        <taxon>Euteleostomi</taxon>
        <taxon>Mammalia</taxon>
        <taxon>Eutheria</taxon>
        <taxon>Euarchontoglires</taxon>
        <taxon>Primates</taxon>
        <taxon>Haplorrhini</taxon>
        <taxon>Catarrhini</taxon>
        <taxon>Hominidae</taxon>
        <taxon>Homo</taxon>
    </lineage>
</organism>
<dbReference type="EC" id="3.6.5.-" evidence="4"/>
<dbReference type="EMBL" id="L10665">
    <property type="protein sequence ID" value="AAC37535.1"/>
    <property type="molecule type" value="mRNA"/>
</dbReference>
<dbReference type="EMBL" id="U55184">
    <property type="protein sequence ID" value="AAD00085.1"/>
    <property type="molecule type" value="Genomic_DNA"/>
</dbReference>
<dbReference type="EMBL" id="U55180">
    <property type="protein sequence ID" value="AAD00085.1"/>
    <property type="status" value="JOINED"/>
    <property type="molecule type" value="Genomic_DNA"/>
</dbReference>
<dbReference type="EMBL" id="U55181">
    <property type="protein sequence ID" value="AAD00085.1"/>
    <property type="status" value="JOINED"/>
    <property type="molecule type" value="Genomic_DNA"/>
</dbReference>
<dbReference type="EMBL" id="U55182">
    <property type="protein sequence ID" value="AAD00085.1"/>
    <property type="status" value="JOINED"/>
    <property type="molecule type" value="Genomic_DNA"/>
</dbReference>
<dbReference type="EMBL" id="U55183">
    <property type="protein sequence ID" value="AAD00085.1"/>
    <property type="status" value="JOINED"/>
    <property type="molecule type" value="Genomic_DNA"/>
</dbReference>
<dbReference type="EMBL" id="AF493893">
    <property type="protein sequence ID" value="AAM12607.1"/>
    <property type="molecule type" value="mRNA"/>
</dbReference>
<dbReference type="EMBL" id="AK316141">
    <property type="protein sequence ID" value="BAH14512.1"/>
    <property type="molecule type" value="mRNA"/>
</dbReference>
<dbReference type="EMBL" id="AP001120">
    <property type="status" value="NOT_ANNOTATED_CDS"/>
    <property type="molecule type" value="Genomic_DNA"/>
</dbReference>
<dbReference type="EMBL" id="AP001269">
    <property type="status" value="NOT_ANNOTATED_CDS"/>
    <property type="molecule type" value="Genomic_DNA"/>
</dbReference>
<dbReference type="EMBL" id="AP005137">
    <property type="status" value="NOT_ANNOTATED_CDS"/>
    <property type="molecule type" value="Genomic_DNA"/>
</dbReference>
<dbReference type="EMBL" id="CH471113">
    <property type="protein sequence ID" value="EAX01573.1"/>
    <property type="molecule type" value="Genomic_DNA"/>
</dbReference>
<dbReference type="EMBL" id="BC050021">
    <property type="protein sequence ID" value="AAH50021.1"/>
    <property type="molecule type" value="mRNA"/>
</dbReference>
<dbReference type="CCDS" id="CCDS11851.1">
    <molecule id="P38405-2"/>
</dbReference>
<dbReference type="CCDS" id="CCDS11852.1">
    <molecule id="P38405-1"/>
</dbReference>
<dbReference type="CCDS" id="CCDS58614.1">
    <molecule id="P38405-3"/>
</dbReference>
<dbReference type="PIR" id="I53271">
    <property type="entry name" value="I53271"/>
</dbReference>
<dbReference type="RefSeq" id="NP_001135811.1">
    <molecule id="P38405-1"/>
    <property type="nucleotide sequence ID" value="NM_001142339.3"/>
</dbReference>
<dbReference type="RefSeq" id="NP_001248372.1">
    <molecule id="P38405-1"/>
    <property type="nucleotide sequence ID" value="NM_001261443.2"/>
</dbReference>
<dbReference type="RefSeq" id="NP_001248373.1">
    <molecule id="P38405-3"/>
    <property type="nucleotide sequence ID" value="NM_001261444.2"/>
</dbReference>
<dbReference type="RefSeq" id="NP_001356316.1">
    <molecule id="P38405-1"/>
    <property type="nucleotide sequence ID" value="NM_001369387.1"/>
</dbReference>
<dbReference type="RefSeq" id="NP_892023.1">
    <molecule id="P38405-2"/>
    <property type="nucleotide sequence ID" value="NM_182978.4"/>
</dbReference>
<dbReference type="PDB" id="8EL8">
    <property type="method" value="EM"/>
    <property type="resolution" value="3.20 A"/>
    <property type="chains" value="A=1-381"/>
</dbReference>
<dbReference type="PDB" id="8IW1">
    <property type="method" value="EM"/>
    <property type="resolution" value="3.40 A"/>
    <property type="chains" value="A=29-66, A=192-238, A=241-381"/>
</dbReference>
<dbReference type="PDB" id="8KGK">
    <property type="method" value="EM"/>
    <property type="resolution" value="3.16 A"/>
    <property type="chains" value="B=7-14, B=191-197"/>
</dbReference>
<dbReference type="PDB" id="8KH4">
    <property type="method" value="EM"/>
    <property type="resolution" value="3.10 A"/>
    <property type="chains" value="B=7-14, B=191-197"/>
</dbReference>
<dbReference type="PDBsum" id="8EL8"/>
<dbReference type="PDBsum" id="8IW1"/>
<dbReference type="PDBsum" id="8KGK"/>
<dbReference type="PDBsum" id="8KH4"/>
<dbReference type="EMDB" id="EMD-28224"/>
<dbReference type="EMDB" id="EMD-35761"/>
<dbReference type="SMR" id="P38405"/>
<dbReference type="BioGRID" id="109036">
    <property type="interactions" value="22"/>
</dbReference>
<dbReference type="FunCoup" id="P38405">
    <property type="interactions" value="1434"/>
</dbReference>
<dbReference type="IntAct" id="P38405">
    <property type="interactions" value="17"/>
</dbReference>
<dbReference type="STRING" id="9606.ENSP00000334051"/>
<dbReference type="GlyGen" id="P38405">
    <property type="glycosylation" value="1 site"/>
</dbReference>
<dbReference type="iPTMnet" id="P38405"/>
<dbReference type="PhosphoSitePlus" id="P38405"/>
<dbReference type="SwissPalm" id="P38405"/>
<dbReference type="BioMuta" id="GNAL"/>
<dbReference type="DMDM" id="585178"/>
<dbReference type="jPOST" id="P38405"/>
<dbReference type="MassIVE" id="P38405"/>
<dbReference type="PaxDb" id="9606-ENSP00000334051"/>
<dbReference type="PeptideAtlas" id="P38405"/>
<dbReference type="ProteomicsDB" id="55293">
    <molecule id="P38405-1"/>
</dbReference>
<dbReference type="ProteomicsDB" id="55294">
    <molecule id="P38405-2"/>
</dbReference>
<dbReference type="ProteomicsDB" id="7052"/>
<dbReference type="Antibodypedia" id="4227">
    <property type="antibodies" value="178 antibodies from 27 providers"/>
</dbReference>
<dbReference type="DNASU" id="2774"/>
<dbReference type="Ensembl" id="ENST00000269162.9">
    <molecule id="P38405-1"/>
    <property type="protein sequence ID" value="ENSP00000269162.4"/>
    <property type="gene ID" value="ENSG00000141404.17"/>
</dbReference>
<dbReference type="Ensembl" id="ENST00000334049.11">
    <molecule id="P38405-2"/>
    <property type="protein sequence ID" value="ENSP00000334051.5"/>
    <property type="gene ID" value="ENSG00000141404.17"/>
</dbReference>
<dbReference type="Ensembl" id="ENST00000423027.8">
    <molecule id="P38405-1"/>
    <property type="protein sequence ID" value="ENSP00000408489.2"/>
    <property type="gene ID" value="ENSG00000141404.17"/>
</dbReference>
<dbReference type="Ensembl" id="ENST00000535121.5">
    <molecule id="P38405-1"/>
    <property type="protein sequence ID" value="ENSP00000439023.1"/>
    <property type="gene ID" value="ENSG00000141404.17"/>
</dbReference>
<dbReference type="Ensembl" id="ENST00000602628.1">
    <molecule id="P38405-3"/>
    <property type="protein sequence ID" value="ENSP00000473600.1"/>
    <property type="gene ID" value="ENSG00000141404.17"/>
</dbReference>
<dbReference type="GeneID" id="2774"/>
<dbReference type="KEGG" id="hsa:2774"/>
<dbReference type="MANE-Select" id="ENST00000334049.11">
    <molecule id="P38405-2"/>
    <property type="protein sequence ID" value="ENSP00000334051.5"/>
    <property type="RefSeq nucleotide sequence ID" value="NM_182978.4"/>
    <property type="RefSeq protein sequence ID" value="NP_892023.1"/>
</dbReference>
<dbReference type="UCSC" id="uc002kqc.4">
    <molecule id="P38405-1"/>
    <property type="organism name" value="human"/>
</dbReference>
<dbReference type="AGR" id="HGNC:4388"/>
<dbReference type="CTD" id="2774"/>
<dbReference type="DisGeNET" id="2774"/>
<dbReference type="GeneCards" id="GNAL"/>
<dbReference type="GeneReviews" id="GNAL"/>
<dbReference type="HGNC" id="HGNC:4388">
    <property type="gene designation" value="GNAL"/>
</dbReference>
<dbReference type="HPA" id="ENSG00000141404">
    <property type="expression patterns" value="Tissue enhanced (brain)"/>
</dbReference>
<dbReference type="MalaCards" id="GNAL"/>
<dbReference type="MIM" id="139312">
    <property type="type" value="gene"/>
</dbReference>
<dbReference type="MIM" id="615073">
    <property type="type" value="phenotype"/>
</dbReference>
<dbReference type="neXtProt" id="NX_P38405"/>
<dbReference type="OpenTargets" id="ENSG00000141404"/>
<dbReference type="Orphanet" id="329466">
    <property type="disease" value="Autosomal dominant focal dystonia, DYT25 type"/>
</dbReference>
<dbReference type="PharmGKB" id="PA28770"/>
<dbReference type="VEuPathDB" id="HostDB:ENSG00000141404"/>
<dbReference type="eggNOG" id="KOG0099">
    <property type="taxonomic scope" value="Eukaryota"/>
</dbReference>
<dbReference type="GeneTree" id="ENSGT00940000155271"/>
<dbReference type="HOGENOM" id="CLU_014184_3_0_1"/>
<dbReference type="InParanoid" id="P38405"/>
<dbReference type="OMA" id="KEFFEHA"/>
<dbReference type="OrthoDB" id="5817230at2759"/>
<dbReference type="PAN-GO" id="P38405">
    <property type="GO annotations" value="6 GO annotations based on evolutionary models"/>
</dbReference>
<dbReference type="PhylomeDB" id="P38405"/>
<dbReference type="TreeFam" id="TF300673"/>
<dbReference type="PathwayCommons" id="P38405"/>
<dbReference type="Reactome" id="R-HSA-170660">
    <property type="pathway name" value="Adenylate cyclase activating pathway"/>
</dbReference>
<dbReference type="Reactome" id="R-HSA-170670">
    <property type="pathway name" value="Adenylate cyclase inhibitory pathway"/>
</dbReference>
<dbReference type="Reactome" id="R-HSA-381753">
    <property type="pathway name" value="Olfactory Signaling Pathway"/>
</dbReference>
<dbReference type="SignaLink" id="P38405"/>
<dbReference type="SIGNOR" id="P38405"/>
<dbReference type="BioGRID-ORCS" id="2774">
    <property type="hits" value="10 hits in 1150 CRISPR screens"/>
</dbReference>
<dbReference type="ChiTaRS" id="GNAL">
    <property type="organism name" value="human"/>
</dbReference>
<dbReference type="GeneWiki" id="GNAL"/>
<dbReference type="GenomeRNAi" id="2774"/>
<dbReference type="Pharos" id="P38405">
    <property type="development level" value="Tbio"/>
</dbReference>
<dbReference type="PRO" id="PR:P38405"/>
<dbReference type="Proteomes" id="UP000005640">
    <property type="component" value="Chromosome 18"/>
</dbReference>
<dbReference type="RNAct" id="P38405">
    <property type="molecule type" value="protein"/>
</dbReference>
<dbReference type="Bgee" id="ENSG00000141404">
    <property type="expression patterns" value="Expressed in lateral globus pallidus and 195 other cell types or tissues"/>
</dbReference>
<dbReference type="ExpressionAtlas" id="P38405">
    <property type="expression patterns" value="baseline and differential"/>
</dbReference>
<dbReference type="GO" id="GO:0005737">
    <property type="term" value="C:cytoplasm"/>
    <property type="evidence" value="ECO:0000318"/>
    <property type="project" value="GO_Central"/>
</dbReference>
<dbReference type="GO" id="GO:0070062">
    <property type="term" value="C:extracellular exosome"/>
    <property type="evidence" value="ECO:0007005"/>
    <property type="project" value="UniProtKB"/>
</dbReference>
<dbReference type="GO" id="GO:0005834">
    <property type="term" value="C:heterotrimeric G-protein complex"/>
    <property type="evidence" value="ECO:0000318"/>
    <property type="project" value="GO_Central"/>
</dbReference>
<dbReference type="GO" id="GO:0005886">
    <property type="term" value="C:plasma membrane"/>
    <property type="evidence" value="ECO:0000250"/>
    <property type="project" value="UniProt"/>
</dbReference>
<dbReference type="GO" id="GO:0010854">
    <property type="term" value="F:adenylate cyclase regulator activity"/>
    <property type="evidence" value="ECO:0000250"/>
    <property type="project" value="UniProt"/>
</dbReference>
<dbReference type="GO" id="GO:0003925">
    <property type="term" value="F:G protein activity"/>
    <property type="evidence" value="ECO:0000250"/>
    <property type="project" value="UniProt"/>
</dbReference>
<dbReference type="GO" id="GO:0001664">
    <property type="term" value="F:G protein-coupled receptor binding"/>
    <property type="evidence" value="ECO:0000318"/>
    <property type="project" value="GO_Central"/>
</dbReference>
<dbReference type="GO" id="GO:0031683">
    <property type="term" value="F:G-protein beta/gamma-subunit complex binding"/>
    <property type="evidence" value="ECO:0000318"/>
    <property type="project" value="GO_Central"/>
</dbReference>
<dbReference type="GO" id="GO:0005525">
    <property type="term" value="F:GTP binding"/>
    <property type="evidence" value="ECO:0007669"/>
    <property type="project" value="UniProtKB-KW"/>
</dbReference>
<dbReference type="GO" id="GO:0003924">
    <property type="term" value="F:GTPase activity"/>
    <property type="evidence" value="ECO:0000318"/>
    <property type="project" value="GO_Central"/>
</dbReference>
<dbReference type="GO" id="GO:0046872">
    <property type="term" value="F:metal ion binding"/>
    <property type="evidence" value="ECO:0007669"/>
    <property type="project" value="UniProtKB-KW"/>
</dbReference>
<dbReference type="GO" id="GO:0007191">
    <property type="term" value="P:adenylate cyclase-activating dopamine receptor signaling pathway"/>
    <property type="evidence" value="ECO:0000318"/>
    <property type="project" value="GO_Central"/>
</dbReference>
<dbReference type="GO" id="GO:0007189">
    <property type="term" value="P:adenylate cyclase-activating G protein-coupled receptor signaling pathway"/>
    <property type="evidence" value="ECO:0000250"/>
    <property type="project" value="UniProt"/>
</dbReference>
<dbReference type="GO" id="GO:0001975">
    <property type="term" value="P:response to amphetamine"/>
    <property type="evidence" value="ECO:0007669"/>
    <property type="project" value="Ensembl"/>
</dbReference>
<dbReference type="GO" id="GO:0031000">
    <property type="term" value="P:response to caffeine"/>
    <property type="evidence" value="ECO:0007669"/>
    <property type="project" value="Ensembl"/>
</dbReference>
<dbReference type="GO" id="GO:0007606">
    <property type="term" value="P:sensory perception of chemical stimulus"/>
    <property type="evidence" value="ECO:0000318"/>
    <property type="project" value="GO_Central"/>
</dbReference>
<dbReference type="GO" id="GO:0007608">
    <property type="term" value="P:sensory perception of smell"/>
    <property type="evidence" value="ECO:0000250"/>
    <property type="project" value="UniProt"/>
</dbReference>
<dbReference type="GO" id="GO:0007165">
    <property type="term" value="P:signal transduction"/>
    <property type="evidence" value="ECO:0000304"/>
    <property type="project" value="ProtInc"/>
</dbReference>
<dbReference type="CDD" id="cd00066">
    <property type="entry name" value="G-alpha"/>
    <property type="match status" value="1"/>
</dbReference>
<dbReference type="FunFam" id="3.40.50.300:FF:000720">
    <property type="entry name" value="Guanine nucleotide-binding protein G(k) subunit alpha"/>
    <property type="match status" value="1"/>
</dbReference>
<dbReference type="FunFam" id="1.10.400.10:FF:000003">
    <property type="entry name" value="Guanine nucleotide-binding protein G(S) subunit alpha"/>
    <property type="match status" value="1"/>
</dbReference>
<dbReference type="FunFam" id="3.40.50.300:FF:006178">
    <property type="entry name" value="Guanine nucleotide-binding protein G(s) subunit alpha isoforms short"/>
    <property type="match status" value="1"/>
</dbReference>
<dbReference type="Gene3D" id="1.10.400.10">
    <property type="entry name" value="GI Alpha 1, domain 2-like"/>
    <property type="match status" value="1"/>
</dbReference>
<dbReference type="Gene3D" id="3.40.50.300">
    <property type="entry name" value="P-loop containing nucleotide triphosphate hydrolases"/>
    <property type="match status" value="1"/>
</dbReference>
<dbReference type="InterPro" id="IPR000367">
    <property type="entry name" value="Gprotein_alpha_S"/>
</dbReference>
<dbReference type="InterPro" id="IPR001019">
    <property type="entry name" value="Gprotein_alpha_su"/>
</dbReference>
<dbReference type="InterPro" id="IPR011025">
    <property type="entry name" value="GproteinA_insert"/>
</dbReference>
<dbReference type="InterPro" id="IPR027417">
    <property type="entry name" value="P-loop_NTPase"/>
</dbReference>
<dbReference type="PANTHER" id="PTHR10218">
    <property type="entry name" value="GTP-BINDING PROTEIN ALPHA SUBUNIT"/>
    <property type="match status" value="1"/>
</dbReference>
<dbReference type="PANTHER" id="PTHR10218:SF233">
    <property type="entry name" value="GUANINE NUCLEOTIDE-BINDING PROTEIN G(OLF) SUBUNIT ALPHA"/>
    <property type="match status" value="1"/>
</dbReference>
<dbReference type="Pfam" id="PF00503">
    <property type="entry name" value="G-alpha"/>
    <property type="match status" value="1"/>
</dbReference>
<dbReference type="PRINTS" id="PR00318">
    <property type="entry name" value="GPROTEINA"/>
</dbReference>
<dbReference type="PRINTS" id="PR00443">
    <property type="entry name" value="GPROTEINAS"/>
</dbReference>
<dbReference type="SMART" id="SM00275">
    <property type="entry name" value="G_alpha"/>
    <property type="match status" value="1"/>
</dbReference>
<dbReference type="SUPFAM" id="SSF52540">
    <property type="entry name" value="P-loop containing nucleoside triphosphate hydrolases"/>
    <property type="match status" value="1"/>
</dbReference>
<dbReference type="SUPFAM" id="SSF47895">
    <property type="entry name" value="Transducin (alpha subunit), insertion domain"/>
    <property type="match status" value="1"/>
</dbReference>
<dbReference type="PROSITE" id="PS51882">
    <property type="entry name" value="G_ALPHA"/>
    <property type="match status" value="1"/>
</dbReference>
<evidence type="ECO:0000250" key="1"/>
<evidence type="ECO:0000250" key="2">
    <source>
        <dbReference type="UniProtKB" id="P04896"/>
    </source>
</evidence>
<evidence type="ECO:0000250" key="3">
    <source>
        <dbReference type="UniProtKB" id="P38406"/>
    </source>
</evidence>
<evidence type="ECO:0000250" key="4">
    <source>
        <dbReference type="UniProtKB" id="Q8CGK7"/>
    </source>
</evidence>
<evidence type="ECO:0000255" key="5">
    <source>
        <dbReference type="PROSITE-ProRule" id="PRU01230"/>
    </source>
</evidence>
<evidence type="ECO:0000256" key="6">
    <source>
        <dbReference type="SAM" id="MobiDB-lite"/>
    </source>
</evidence>
<evidence type="ECO:0000269" key="7">
    <source>
    </source>
</evidence>
<evidence type="ECO:0000269" key="8">
    <source>
    </source>
</evidence>
<evidence type="ECO:0000269" key="9">
    <source>
    </source>
</evidence>
<evidence type="ECO:0000269" key="10">
    <source>
    </source>
</evidence>
<evidence type="ECO:0000303" key="11">
    <source>
    </source>
</evidence>
<evidence type="ECO:0000303" key="12">
    <source>
    </source>
</evidence>
<evidence type="ECO:0000303" key="13">
    <source>
    </source>
</evidence>
<evidence type="ECO:0000303" key="14">
    <source>
    </source>
</evidence>
<evidence type="ECO:0000305" key="15"/>
<evidence type="ECO:0000312" key="16">
    <source>
        <dbReference type="HGNC" id="HGNC:4388"/>
    </source>
</evidence>
<evidence type="ECO:0007744" key="17">
    <source>
        <dbReference type="PDB" id="8EL8"/>
    </source>
</evidence>
<evidence type="ECO:0007744" key="18">
    <source>
        <dbReference type="PDB" id="8IW1"/>
    </source>
</evidence>
<evidence type="ECO:0007829" key="19">
    <source>
        <dbReference type="PDB" id="8EL8"/>
    </source>
</evidence>
<evidence type="ECO:0007829" key="20">
    <source>
        <dbReference type="PDB" id="8IW1"/>
    </source>
</evidence>
<evidence type="ECO:0007829" key="21">
    <source>
        <dbReference type="PDB" id="8KGK"/>
    </source>
</evidence>
<keyword id="KW-0002">3D-structure</keyword>
<keyword id="KW-0013">ADP-ribosylation</keyword>
<keyword id="KW-0025">Alternative splicing</keyword>
<keyword id="KW-1003">Cell membrane</keyword>
<keyword id="KW-0225">Disease variant</keyword>
<keyword id="KW-1023">Dystonia</keyword>
<keyword id="KW-0342">GTP-binding</keyword>
<keyword id="KW-0378">Hydrolase</keyword>
<keyword id="KW-0449">Lipoprotein</keyword>
<keyword id="KW-0460">Magnesium</keyword>
<keyword id="KW-0472">Membrane</keyword>
<keyword id="KW-0479">Metal-binding</keyword>
<keyword id="KW-0547">Nucleotide-binding</keyword>
<keyword id="KW-0564">Palmitate</keyword>
<keyword id="KW-0597">Phosphoprotein</keyword>
<keyword id="KW-1267">Proteomics identification</keyword>
<keyword id="KW-1185">Reference proteome</keyword>
<keyword id="KW-0807">Transducer</keyword>
<comment type="function">
    <text evidence="3 4">Guanine nucleotide-binding protein (G protein) involved as transducer in olfactory signal transduction controlled by G protein-coupled receptors (GPCRs) (By similarity). Contains the guanine nucleotide binding site and alternates between an active, GTP-bound state and an inactive, GDP-bound state (By similarity). Signaling by an activated GPCR promotes GDP release and GTP binding (By similarity). The alpha subunit has a low GTPase activity that converts bound GTP to GDP, thereby terminating the signal (By similarity). Both GDP release and GTP hydrolysis are modulated by numerous regulatory proteins (By similarity). GNAL/G(olf) alpha specifically mediates olfactory signal transduction within the olfactory neuroepithelium and the basal ganglia following GPCRs activation (By similarity). Acts by promoting the specific activation of adenylyl cyclase ADCY3, resulting in increased levels of the signaling molecule cAMP (By similarity).</text>
</comment>
<comment type="catalytic activity">
    <reaction evidence="4">
        <text>GTP + H2O = GDP + phosphate + H(+)</text>
        <dbReference type="Rhea" id="RHEA:19669"/>
        <dbReference type="ChEBI" id="CHEBI:15377"/>
        <dbReference type="ChEBI" id="CHEBI:15378"/>
        <dbReference type="ChEBI" id="CHEBI:37565"/>
        <dbReference type="ChEBI" id="CHEBI:43474"/>
        <dbReference type="ChEBI" id="CHEBI:58189"/>
    </reaction>
    <physiologicalReaction direction="left-to-right" evidence="4">
        <dbReference type="Rhea" id="RHEA:19670"/>
    </physiologicalReaction>
</comment>
<comment type="subunit">
    <text evidence="4 8 9">G proteins are composed of 3 units; alpha, beta and gamma (By similarity). The alpha chain contains the guanine nucleotide binding site. Interacts with GAS2L2 (PubMed:23994616). Interacts (GDP-bound form) with RIC8B (via C-terminus); promoting GNAL folding and association with the plasma membrane (PubMed:36931277).</text>
</comment>
<comment type="subcellular location">
    <subcellularLocation>
        <location evidence="4">Cell membrane</location>
        <topology evidence="4">Peripheral membrane protein</topology>
    </subcellularLocation>
</comment>
<comment type="alternative products">
    <event type="alternative splicing"/>
    <isoform>
        <id>P38405-1</id>
        <name>1</name>
        <sequence type="displayed"/>
    </isoform>
    <isoform>
        <id>P38405-2</id>
        <name>2</name>
        <sequence type="described" ref="VSP_043050"/>
    </isoform>
    <isoform>
        <id>P38405-3</id>
        <name>3</name>
        <sequence type="described" ref="VSP_045130"/>
    </isoform>
</comment>
<comment type="tissue specificity">
    <text evidence="10">Detected in olfactory neuroepithelium, brain, testis, and to a lower extent in retina, lung alveoli, spleen (PubMed:8243272). Trace amounts where seen in kidney, adrenal gland and liver (PubMed:8243272). Found to be expressed in all the insulinomas examined (PubMed:8243272).</text>
</comment>
<comment type="disease" evidence="7">
    <disease id="DI-03651">
        <name>Dystonia 25</name>
        <acronym>DYT25</acronym>
        <description>A form of dystonia, a disorder defined by the presence of sustained involuntary muscle contraction, often leading to abnormal postures. DYT25 is an autosomal dominant neurologic disorder characterized by adult onset of focal dystonia, usually involving the neck. The dystonia most often progresses to involve other regions, particularly the face and laryngeal muscles, and less commonly the trunk and limbs.</description>
        <dbReference type="MIM" id="615073"/>
    </disease>
    <text>The disease is caused by variants affecting the gene represented in this entry.</text>
</comment>
<comment type="similarity">
    <text evidence="15">Belongs to the G-alpha family. G(s) subfamily.</text>
</comment>
<protein>
    <recommendedName>
        <fullName evidence="14">Guanine nucleotide-binding protein G(olf) subunit alpha</fullName>
        <ecNumber evidence="4">3.6.5.-</ecNumber>
    </recommendedName>
    <alternativeName>
        <fullName evidence="14">Adenylate cyclase-stimulating G alpha protein, olfactory type</fullName>
    </alternativeName>
</protein>
<proteinExistence type="evidence at protein level"/>
<gene>
    <name evidence="13 16" type="primary">GNAL</name>
</gene>
<feature type="initiator methionine" description="Removed" evidence="2">
    <location>
        <position position="1"/>
    </location>
</feature>
<feature type="chain" id="PRO_0000203732" description="Guanine nucleotide-binding protein G(olf) subunit alpha">
    <location>
        <begin position="2"/>
        <end position="381"/>
    </location>
</feature>
<feature type="domain" description="G-alpha" evidence="5">
    <location>
        <begin position="41"/>
        <end position="381"/>
    </location>
</feature>
<feature type="region of interest" description="Disordered" evidence="6">
    <location>
        <begin position="1"/>
        <end position="25"/>
    </location>
</feature>
<feature type="region of interest" description="G1 motif" evidence="5">
    <location>
        <begin position="44"/>
        <end position="57"/>
    </location>
</feature>
<feature type="region of interest" description="G2 motif" evidence="5">
    <location>
        <begin position="183"/>
        <end position="191"/>
    </location>
</feature>
<feature type="region of interest" description="G3 motif" evidence="5">
    <location>
        <begin position="206"/>
        <end position="215"/>
    </location>
</feature>
<feature type="region of interest" description="G4 motif" evidence="5">
    <location>
        <begin position="275"/>
        <end position="282"/>
    </location>
</feature>
<feature type="region of interest" description="G5 motif" evidence="5">
    <location>
        <begin position="351"/>
        <end position="356"/>
    </location>
</feature>
<feature type="compositionally biased region" description="Basic and acidic residues" evidence="6">
    <location>
        <begin position="10"/>
        <end position="25"/>
    </location>
</feature>
<feature type="binding site" evidence="4">
    <location>
        <position position="52"/>
    </location>
    <ligand>
        <name>GTP</name>
        <dbReference type="ChEBI" id="CHEBI:37565"/>
    </ligand>
</feature>
<feature type="binding site" evidence="4">
    <location>
        <position position="53"/>
    </location>
    <ligand>
        <name>GTP</name>
        <dbReference type="ChEBI" id="CHEBI:37565"/>
    </ligand>
</feature>
<feature type="binding site" evidence="4">
    <location>
        <position position="54"/>
    </location>
    <ligand>
        <name>GTP</name>
        <dbReference type="ChEBI" id="CHEBI:37565"/>
    </ligand>
</feature>
<feature type="binding site" evidence="4">
    <location>
        <position position="55"/>
    </location>
    <ligand>
        <name>GTP</name>
        <dbReference type="ChEBI" id="CHEBI:37565"/>
    </ligand>
</feature>
<feature type="binding site" evidence="4">
    <location>
        <position position="56"/>
    </location>
    <ligand>
        <name>GTP</name>
        <dbReference type="ChEBI" id="CHEBI:37565"/>
    </ligand>
</feature>
<feature type="binding site" evidence="4">
    <location>
        <position position="56"/>
    </location>
    <ligand>
        <name>Mg(2+)</name>
        <dbReference type="ChEBI" id="CHEBI:18420"/>
    </ligand>
</feature>
<feature type="binding site" evidence="4">
    <location>
        <position position="57"/>
    </location>
    <ligand>
        <name>GTP</name>
        <dbReference type="ChEBI" id="CHEBI:37565"/>
    </ligand>
</feature>
<feature type="binding site" evidence="4">
    <location>
        <position position="185"/>
    </location>
    <ligand>
        <name>GTP</name>
        <dbReference type="ChEBI" id="CHEBI:37565"/>
    </ligand>
</feature>
<feature type="binding site" evidence="4">
    <location>
        <position position="186"/>
    </location>
    <ligand>
        <name>GTP</name>
        <dbReference type="ChEBI" id="CHEBI:37565"/>
    </ligand>
</feature>
<feature type="binding site" evidence="4">
    <location>
        <position position="191"/>
    </location>
    <ligand>
        <name>GTP</name>
        <dbReference type="ChEBI" id="CHEBI:37565"/>
    </ligand>
</feature>
<feature type="binding site" evidence="4">
    <location>
        <position position="191"/>
    </location>
    <ligand>
        <name>Mg(2+)</name>
        <dbReference type="ChEBI" id="CHEBI:18420"/>
    </ligand>
</feature>
<feature type="binding site" evidence="4">
    <location>
        <position position="210"/>
    </location>
    <ligand>
        <name>Mg(2+)</name>
        <dbReference type="ChEBI" id="CHEBI:18420"/>
    </ligand>
</feature>
<feature type="binding site" evidence="4">
    <location>
        <position position="213"/>
    </location>
    <ligand>
        <name>GTP</name>
        <dbReference type="ChEBI" id="CHEBI:37565"/>
    </ligand>
</feature>
<feature type="binding site" evidence="4">
    <location>
        <position position="279"/>
    </location>
    <ligand>
        <name>GTP</name>
        <dbReference type="ChEBI" id="CHEBI:37565"/>
    </ligand>
</feature>
<feature type="binding site" evidence="4">
    <location>
        <position position="280"/>
    </location>
    <ligand>
        <name>GTP</name>
        <dbReference type="ChEBI" id="CHEBI:37565"/>
    </ligand>
</feature>
<feature type="binding site" evidence="4">
    <location>
        <position position="282"/>
    </location>
    <ligand>
        <name>GTP</name>
        <dbReference type="ChEBI" id="CHEBI:37565"/>
    </ligand>
</feature>
<feature type="binding site" evidence="4">
    <location>
        <position position="353"/>
    </location>
    <ligand>
        <name>GTP</name>
        <dbReference type="ChEBI" id="CHEBI:37565"/>
    </ligand>
</feature>
<feature type="modified residue" description="Phosphothreonine" evidence="4">
    <location>
        <position position="178"/>
    </location>
</feature>
<feature type="modified residue" description="ADP-ribosylarginine; by cholera toxin" evidence="1">
    <location>
        <position position="188"/>
    </location>
</feature>
<feature type="lipid moiety-binding region" description="N-palmitoyl glycine" evidence="2">
    <location>
        <position position="2"/>
    </location>
</feature>
<feature type="lipid moiety-binding region" description="S-palmitoyl cysteine" evidence="2">
    <location>
        <position position="3"/>
    </location>
</feature>
<feature type="splice variant" id="VSP_045130" description="In isoform 3." evidence="11">
    <location>
        <begin position="1"/>
        <end position="207"/>
    </location>
</feature>
<feature type="splice variant" id="VSP_043050" description="In isoform 2." evidence="12">
    <original>MGCLGGNSKTTEDQGVDEKERREANKKIEKQLQKERLAYKA</original>
    <variation>MGLCYSLRPLLFGGPGDDPCAASEPPVEDAQPAPAPALAPVRAAARDTARTLLPRGGEGSPACARPKADKPKEKRQRTEQLSAEEREAAKEREAVKEARKVSRGIDRMLRDQKRDLQQ</variation>
    <location>
        <begin position="1"/>
        <end position="41"/>
    </location>
</feature>
<feature type="sequence variant" id="VAR_069329" description="In dbSNP:rs1039372506." evidence="7">
    <original>V</original>
    <variation>F</variation>
    <location>
        <position position="16"/>
    </location>
</feature>
<feature type="sequence variant" id="VAR_069330" description="In DYT25." evidence="7">
    <location>
        <begin position="102"/>
        <end position="104"/>
    </location>
</feature>
<feature type="sequence variant" id="VAR_069331" description="In DYT25; loss of function mutation; dbSNP:rs398122923." evidence="7">
    <original>V</original>
    <variation>M</variation>
    <location>
        <position position="137"/>
    </location>
</feature>
<feature type="sequence variant" id="VAR_069332" description="In DYT25; loss of function mutation; dbSNP:rs398122925." evidence="7">
    <original>E</original>
    <variation>K</variation>
    <location>
        <position position="155"/>
    </location>
</feature>
<feature type="helix" evidence="20">
    <location>
        <begin position="29"/>
        <end position="40"/>
    </location>
</feature>
<feature type="strand" evidence="19">
    <location>
        <begin position="45"/>
        <end position="47"/>
    </location>
</feature>
<feature type="strand" evidence="20">
    <location>
        <begin position="51"/>
        <end position="53"/>
    </location>
</feature>
<feature type="helix" evidence="20">
    <location>
        <begin position="55"/>
        <end position="62"/>
    </location>
</feature>
<feature type="strand" evidence="21">
    <location>
        <begin position="195"/>
        <end position="197"/>
    </location>
</feature>
<feature type="strand" evidence="19">
    <location>
        <begin position="208"/>
        <end position="210"/>
    </location>
</feature>
<feature type="turn" evidence="20">
    <location>
        <begin position="219"/>
        <end position="224"/>
    </location>
</feature>
<feature type="strand" evidence="19">
    <location>
        <begin position="230"/>
        <end position="234"/>
    </location>
</feature>
<feature type="helix" evidence="19">
    <location>
        <begin position="252"/>
        <end position="264"/>
    </location>
</feature>
<feature type="strand" evidence="19">
    <location>
        <begin position="267"/>
        <end position="271"/>
    </location>
</feature>
<feature type="strand" evidence="19">
    <location>
        <begin position="273"/>
        <end position="278"/>
    </location>
</feature>
<feature type="helix" evidence="19">
    <location>
        <begin position="281"/>
        <end position="290"/>
    </location>
</feature>
<feature type="helix" evidence="19">
    <location>
        <begin position="295"/>
        <end position="297"/>
    </location>
</feature>
<feature type="helix" evidence="19">
    <location>
        <begin position="300"/>
        <end position="302"/>
    </location>
</feature>
<feature type="helix" evidence="19">
    <location>
        <begin position="319"/>
        <end position="337"/>
    </location>
</feature>
<feature type="turn" evidence="19">
    <location>
        <begin position="341"/>
        <end position="343"/>
    </location>
</feature>
<feature type="strand" evidence="19">
    <location>
        <begin position="346"/>
        <end position="350"/>
    </location>
</feature>
<feature type="helix" evidence="20">
    <location>
        <begin position="358"/>
        <end position="364"/>
    </location>
</feature>
<feature type="helix" evidence="19">
    <location>
        <begin position="365"/>
        <end position="377"/>
    </location>
</feature>